<comment type="function">
    <text evidence="2 9 10 12 13 15 17 18 27">Self-ligand receptor of the signaling lymphocytic activation molecule (SLAM) family. SLAM receptors triggered by homo- or heterotypic cell-cell interactions are modulating the activation and differentiation of a wide variety of immune cells and thus are involved in the regulation and interconnection of both innate and adaptive immune response. Activities are controlled by presence or absence of small cytoplasmic adapter proteins, SH2D1A/SAP and/or SH2D1B/EAT-2. Can mediate natural killer (NK) cell cytotoxicity dependent on SH2D1A and SH2D1B (By similarity). Increases proliferative responses of activated T-cells and SH2D1A/SAP does not seem be required for this process. Homophilic interactions enhance interferon gamma/IFNG secretion in lymphocytes and induce platelet stimulation via a SH2D1A-dependent pathway. May serve as a marker for hematopoietic progenitor cells (PubMed:11564780, PubMed:12115647, PubMed:12928397, PubMed:12962726, PubMed:16037392) Required for a prolonged T-cell:B-cell contact, optimal T follicular helper function, and germinal center formation. In germinal centers involved in maintaining B-cell tolerance and in preventing autoimmunity (By similarity). In mast cells negatively regulates high affinity immunoglobulin epsilon receptor signaling; independent of SH2D1A and SH2D1B but implicating FES and PTPN6/SHP-1 (PubMed:22068234). In macrophages enhances LPS-induced MAPK phosphorylation and NF-kappaB activation and modulates LPS-induced cytokine secretion; involving ITSM 2 (By similarity). Positively regulates macroautophagy in primary dendritic cells via stabilization of IRF8; inhibits TRIM21-mediated proteasomal degradation of IRF8 (PubMed:29434592).</text>
</comment>
<comment type="subunit">
    <text evidence="7 8 10 11 16">Homodimer; via its extracellular domain. Forms a head to tail dimer with a CD48 molecule from another cell. Interacts with SH2 domain-containing proteins SH2D1A/SAP and SH2D1B/EAT-2. Interacts with tyrosine-protein phosphatases PTPN6/SHP-1 and PTPN11//SHP-2 via its phosphorylated cytoplasmic domain, and this interaction is blocked by SH2D1A. Interacts (via phosphorylated ITSM 1 and 2) with INPP5D/SHIP1.</text>
</comment>
<comment type="interaction">
    <interactant intactId="EBI-6691679">
        <id>Q9UIB8</id>
    </interactant>
    <interactant intactId="EBI-6691679">
        <id>Q9UIB8</id>
        <label>CD84</label>
    </interactant>
    <organismsDiffer>false</organismsDiffer>
    <experiments>3</experiments>
</comment>
<comment type="interaction">
    <interactant intactId="EBI-6691679">
        <id>Q9UIB8</id>
    </interactant>
    <interactant intactId="EBI-3923013">
        <id>O14796</id>
        <label>SH2D1B</label>
    </interactant>
    <organismsDiffer>false</organismsDiffer>
    <experiments>3</experiments>
</comment>
<comment type="subcellular location">
    <subcellularLocation>
        <location evidence="7 13">Cell membrane</location>
        <topology evidence="7 13">Single-pass type I membrane protein</topology>
    </subcellularLocation>
</comment>
<comment type="alternative products">
    <event type="alternative splicing"/>
    <isoform>
        <id>Q9UIB8-1</id>
        <name>1</name>
        <name>CD84a</name>
        <sequence type="displayed"/>
    </isoform>
    <isoform>
        <id>Q9UIB8-2</id>
        <name>2</name>
        <name>CD84b</name>
        <sequence type="described" ref="VSP_020852"/>
    </isoform>
    <isoform>
        <id>Q9UIB8-3</id>
        <name>3</name>
        <name>CD84c</name>
        <sequence type="described" ref="VSP_020851"/>
    </isoform>
    <isoform>
        <id>Q9UIB8-4</id>
        <name>4</name>
        <name>CD84e</name>
        <sequence type="described" ref="VSP_020854 VSP_020856"/>
    </isoform>
    <isoform>
        <id>Q9UIB8-5</id>
        <name>5</name>
        <name>CD84d</name>
        <sequence type="described" ref="VSP_020853 VSP_020855"/>
    </isoform>
    <isoform>
        <id>Q9UIB8-6</id>
        <name>6</name>
        <name>CD84s</name>
        <sequence type="described" ref="VSP_020849 VSP_020850"/>
    </isoform>
    <isoform>
        <id>Q9UIB8-7</id>
        <name>7</name>
        <sequence type="described" ref="VSP_020848 VSP_020851"/>
    </isoform>
</comment>
<comment type="tissue specificity">
    <text evidence="6 9 10 13 14 17 19">Predominantly expressed in hematopoietic tissues, such as lymph node, spleen and peripheral leukocytes. Expressed in macrophages, B-cells, monocytes, platelets, thymocytes, T-cells and dendritic cells. Highly expressed in memory T-cells. Expressed in mast cells.</text>
</comment>
<comment type="developmental stage">
    <text evidence="10">Expression is slightly increased in naive B-cells after the first dividion. By contrast, expression on memory B-cells decreased with each successive division.</text>
</comment>
<comment type="domain">
    <text evidence="1 28">The ITSMs (immunoreceptor tyrosine-based switch motifs) with the consensus sequence T-X-Y-X-X-[VI] present in SLAM family receptors have overlapping specificity for activating and inhibitory SH2 domain-containingbinding partners. Especially they mediate the interaction with the SH2 domain of SH2D1A and SH2D1B. A 'three-pronged' mechanism is proposed involving threonine (position -2), phosphorylated tyrosine (position 0) and valine/isoleucine (position +3).</text>
</comment>
<comment type="PTM">
    <text evidence="7 10 12 15 17">Phosphorylated by tyrosine-protein kinase LCK on tyrosine residues following ligation induced by agonist monoclonal antibody. The association with SH2D1A is dependent of tyrosine phosphorylation of its cytoplasmic domain. Phosphorylated on Tyr-296 and Tyr-316 following platelet aggregation. Phosphorylated on tyrosine residues upon high affinity immunoglobulin epsilon receptor aggregation in mast cells.</text>
</comment>
<comment type="PTM">
    <text evidence="6 19">N-glycosylated.</text>
</comment>
<protein>
    <recommendedName>
        <fullName>SLAM family member 5</fullName>
    </recommendedName>
    <alternativeName>
        <fullName>Cell surface antigen MAX.3</fullName>
    </alternativeName>
    <alternativeName>
        <fullName>Hly9-beta</fullName>
    </alternativeName>
    <alternativeName>
        <fullName>Leukocyte differentiation antigen CD84</fullName>
    </alternativeName>
    <alternativeName>
        <fullName>Signaling lymphocytic activation molecule 5</fullName>
    </alternativeName>
    <cdAntigenName>CD84</cdAntigenName>
</protein>
<dbReference type="EMBL" id="U82988">
    <property type="protein sequence ID" value="AAB84364.1"/>
    <property type="molecule type" value="mRNA"/>
</dbReference>
<dbReference type="EMBL" id="AJ223324">
    <property type="protein sequence ID" value="CAA11264.1"/>
    <property type="molecule type" value="mRNA"/>
</dbReference>
<dbReference type="EMBL" id="AF054815">
    <property type="protein sequence ID" value="AAF21721.1"/>
    <property type="molecule type" value="mRNA"/>
</dbReference>
<dbReference type="EMBL" id="AF054816">
    <property type="protein sequence ID" value="AAF21722.1"/>
    <property type="molecule type" value="mRNA"/>
</dbReference>
<dbReference type="EMBL" id="AF054817">
    <property type="protein sequence ID" value="AAF21723.1"/>
    <property type="molecule type" value="mRNA"/>
</dbReference>
<dbReference type="EMBL" id="AF054818">
    <property type="protein sequence ID" value="AAF21724.1"/>
    <property type="molecule type" value="mRNA"/>
</dbReference>
<dbReference type="EMBL" id="AF081189">
    <property type="protein sequence ID" value="AAD13155.1"/>
    <property type="molecule type" value="Genomic_DNA"/>
</dbReference>
<dbReference type="EMBL" id="AH008972">
    <property type="protein sequence ID" value="AAF21784.1"/>
    <property type="molecule type" value="Genomic_DNA"/>
</dbReference>
<dbReference type="EMBL" id="AH008376">
    <property type="protein sequence ID" value="AAF06840.1"/>
    <property type="molecule type" value="Genomic_DNA"/>
</dbReference>
<dbReference type="EMBL" id="U96627">
    <property type="protein sequence ID" value="AAD04232.1"/>
    <property type="molecule type" value="mRNA"/>
</dbReference>
<dbReference type="EMBL" id="Y12632">
    <property type="protein sequence ID" value="CAA73181.1"/>
    <property type="molecule type" value="mRNA"/>
</dbReference>
<dbReference type="EMBL" id="AK296290">
    <property type="protein sequence ID" value="BAH12304.1"/>
    <property type="molecule type" value="mRNA"/>
</dbReference>
<dbReference type="EMBL" id="AK313496">
    <property type="protein sequence ID" value="BAG36278.1"/>
    <property type="molecule type" value="mRNA"/>
</dbReference>
<dbReference type="EMBL" id="CR541847">
    <property type="protein sequence ID" value="CAG46645.1"/>
    <property type="molecule type" value="mRNA"/>
</dbReference>
<dbReference type="EMBL" id="CR933666">
    <property type="protein sequence ID" value="CAI45963.1"/>
    <property type="molecule type" value="mRNA"/>
</dbReference>
<dbReference type="EMBL" id="AL138930">
    <property type="status" value="NOT_ANNOTATED_CDS"/>
    <property type="molecule type" value="Genomic_DNA"/>
</dbReference>
<dbReference type="EMBL" id="CH471121">
    <property type="protein sequence ID" value="EAW52707.1"/>
    <property type="molecule type" value="Genomic_DNA"/>
</dbReference>
<dbReference type="EMBL" id="BC020063">
    <property type="protein sequence ID" value="AAH20063.1"/>
    <property type="molecule type" value="mRNA"/>
</dbReference>
<dbReference type="CCDS" id="CCDS1206.1">
    <molecule id="Q9UIB8-3"/>
</dbReference>
<dbReference type="CCDS" id="CCDS53395.1">
    <molecule id="Q9UIB8-7"/>
</dbReference>
<dbReference type="CCDS" id="CCDS53396.1">
    <molecule id="Q9UIB8-1"/>
</dbReference>
<dbReference type="CCDS" id="CCDS53397.1">
    <molecule id="Q9UIB8-5"/>
</dbReference>
<dbReference type="CCDS" id="CCDS81388.1">
    <molecule id="Q9UIB8-2"/>
</dbReference>
<dbReference type="RefSeq" id="NP_001171808.1">
    <molecule id="Q9UIB8-1"/>
    <property type="nucleotide sequence ID" value="NM_001184879.2"/>
</dbReference>
<dbReference type="RefSeq" id="NP_001171810.1">
    <molecule id="Q9UIB8-5"/>
    <property type="nucleotide sequence ID" value="NM_001184881.2"/>
</dbReference>
<dbReference type="RefSeq" id="NP_001171811.1">
    <molecule id="Q9UIB8-7"/>
    <property type="nucleotide sequence ID" value="NM_001184882.2"/>
</dbReference>
<dbReference type="RefSeq" id="NP_001317671.1">
    <molecule id="Q9UIB8-2"/>
    <property type="nucleotide sequence ID" value="NM_001330742.2"/>
</dbReference>
<dbReference type="RefSeq" id="NP_003865.1">
    <molecule id="Q9UIB8-3"/>
    <property type="nucleotide sequence ID" value="NM_003874.4"/>
</dbReference>
<dbReference type="PDB" id="2PKD">
    <property type="method" value="X-ray"/>
    <property type="resolution" value="2.04 A"/>
    <property type="chains" value="A/B/C/D/E/F=22-131"/>
</dbReference>
<dbReference type="PDBsum" id="2PKD"/>
<dbReference type="SMR" id="Q9UIB8"/>
<dbReference type="BioGRID" id="114359">
    <property type="interactions" value="8"/>
</dbReference>
<dbReference type="DIP" id="DIP-60957N"/>
<dbReference type="ELM" id="Q9UIB8"/>
<dbReference type="FunCoup" id="Q9UIB8">
    <property type="interactions" value="153"/>
</dbReference>
<dbReference type="IntAct" id="Q9UIB8">
    <property type="interactions" value="4"/>
</dbReference>
<dbReference type="MINT" id="Q9UIB8"/>
<dbReference type="STRING" id="9606.ENSP00000312367"/>
<dbReference type="GlyCosmos" id="Q9UIB8">
    <property type="glycosylation" value="1 site, No reported glycans"/>
</dbReference>
<dbReference type="GlyGen" id="Q9UIB8">
    <property type="glycosylation" value="2 sites"/>
</dbReference>
<dbReference type="iPTMnet" id="Q9UIB8"/>
<dbReference type="PhosphoSitePlus" id="Q9UIB8"/>
<dbReference type="BioMuta" id="CD84"/>
<dbReference type="DMDM" id="74762772"/>
<dbReference type="MassIVE" id="Q9UIB8"/>
<dbReference type="PaxDb" id="9606-ENSP00000312367"/>
<dbReference type="PeptideAtlas" id="Q9UIB8"/>
<dbReference type="ProteomicsDB" id="84484">
    <molecule id="Q9UIB8-1"/>
</dbReference>
<dbReference type="ProteomicsDB" id="84485">
    <molecule id="Q9UIB8-2"/>
</dbReference>
<dbReference type="ProteomicsDB" id="84486">
    <molecule id="Q9UIB8-3"/>
</dbReference>
<dbReference type="ProteomicsDB" id="84487">
    <molecule id="Q9UIB8-4"/>
</dbReference>
<dbReference type="ProteomicsDB" id="84488">
    <molecule id="Q9UIB8-5"/>
</dbReference>
<dbReference type="ProteomicsDB" id="84489">
    <molecule id="Q9UIB8-6"/>
</dbReference>
<dbReference type="ProteomicsDB" id="84490">
    <molecule id="Q9UIB8-7"/>
</dbReference>
<dbReference type="Antibodypedia" id="20494">
    <property type="antibodies" value="762 antibodies from 41 providers"/>
</dbReference>
<dbReference type="DNASU" id="8832"/>
<dbReference type="Ensembl" id="ENST00000311224.8">
    <molecule id="Q9UIB8-1"/>
    <property type="protein sequence ID" value="ENSP00000312367.4"/>
    <property type="gene ID" value="ENSG00000066294.15"/>
</dbReference>
<dbReference type="Ensembl" id="ENST00000368048.7">
    <molecule id="Q9UIB8-2"/>
    <property type="protein sequence ID" value="ENSP00000357027.3"/>
    <property type="gene ID" value="ENSG00000066294.15"/>
</dbReference>
<dbReference type="Ensembl" id="ENST00000368051.3">
    <molecule id="Q9UIB8-5"/>
    <property type="protein sequence ID" value="ENSP00000357030.3"/>
    <property type="gene ID" value="ENSG00000066294.15"/>
</dbReference>
<dbReference type="Ensembl" id="ENST00000368054.8">
    <molecule id="Q9UIB8-3"/>
    <property type="protein sequence ID" value="ENSP00000357033.4"/>
    <property type="gene ID" value="ENSG00000066294.15"/>
</dbReference>
<dbReference type="Ensembl" id="ENST00000534968.5">
    <molecule id="Q9UIB8-7"/>
    <property type="protein sequence ID" value="ENSP00000442845.1"/>
    <property type="gene ID" value="ENSG00000066294.15"/>
</dbReference>
<dbReference type="GeneID" id="8832"/>
<dbReference type="KEGG" id="hsa:8832"/>
<dbReference type="MANE-Select" id="ENST00000368054.8">
    <molecule id="Q9UIB8-3"/>
    <property type="protein sequence ID" value="ENSP00000357033.4"/>
    <property type="RefSeq nucleotide sequence ID" value="NM_003874.4"/>
    <property type="RefSeq protein sequence ID" value="NP_003865.1"/>
</dbReference>
<dbReference type="UCSC" id="uc001fwf.5">
    <molecule id="Q9UIB8-1"/>
    <property type="organism name" value="human"/>
</dbReference>
<dbReference type="AGR" id="HGNC:1704"/>
<dbReference type="CTD" id="8832"/>
<dbReference type="DisGeNET" id="8832"/>
<dbReference type="GeneCards" id="CD84"/>
<dbReference type="HGNC" id="HGNC:1704">
    <property type="gene designation" value="CD84"/>
</dbReference>
<dbReference type="HPA" id="ENSG00000066294">
    <property type="expression patterns" value="Tissue enhanced (lymphoid)"/>
</dbReference>
<dbReference type="MIM" id="604513">
    <property type="type" value="gene"/>
</dbReference>
<dbReference type="neXtProt" id="NX_Q9UIB8"/>
<dbReference type="OpenTargets" id="ENSG00000066294"/>
<dbReference type="PharmGKB" id="PA26242"/>
<dbReference type="VEuPathDB" id="HostDB:ENSG00000066294"/>
<dbReference type="eggNOG" id="ENOG502SB7W">
    <property type="taxonomic scope" value="Eukaryota"/>
</dbReference>
<dbReference type="GeneTree" id="ENSGT01030000234540"/>
<dbReference type="HOGENOM" id="CLU_069386_1_1_1"/>
<dbReference type="InParanoid" id="Q9UIB8"/>
<dbReference type="OMA" id="YTYVMVT"/>
<dbReference type="OrthoDB" id="8741746at2759"/>
<dbReference type="PAN-GO" id="Q9UIB8">
    <property type="GO annotations" value="6 GO annotations based on evolutionary models"/>
</dbReference>
<dbReference type="PhylomeDB" id="Q9UIB8"/>
<dbReference type="TreeFam" id="TF334964"/>
<dbReference type="PathwayCommons" id="Q9UIB8"/>
<dbReference type="Reactome" id="R-HSA-202733">
    <property type="pathway name" value="Cell surface interactions at the vascular wall"/>
</dbReference>
<dbReference type="SignaLink" id="Q9UIB8"/>
<dbReference type="BioGRID-ORCS" id="8832">
    <property type="hits" value="10 hits in 1149 CRISPR screens"/>
</dbReference>
<dbReference type="EvolutionaryTrace" id="Q9UIB8"/>
<dbReference type="GeneWiki" id="CD84"/>
<dbReference type="GenomeRNAi" id="8832"/>
<dbReference type="Pharos" id="Q9UIB8">
    <property type="development level" value="Tbio"/>
</dbReference>
<dbReference type="PRO" id="PR:Q9UIB8"/>
<dbReference type="Proteomes" id="UP000005640">
    <property type="component" value="Chromosome 1"/>
</dbReference>
<dbReference type="RNAct" id="Q9UIB8">
    <property type="molecule type" value="protein"/>
</dbReference>
<dbReference type="Bgee" id="ENSG00000066294">
    <property type="expression patterns" value="Expressed in tibia and 170 other cell types or tissues"/>
</dbReference>
<dbReference type="GO" id="GO:0009897">
    <property type="term" value="C:external side of plasma membrane"/>
    <property type="evidence" value="ECO:0000318"/>
    <property type="project" value="GO_Central"/>
</dbReference>
<dbReference type="GO" id="GO:0043231">
    <property type="term" value="C:intracellular membrane-bounded organelle"/>
    <property type="evidence" value="ECO:0000314"/>
    <property type="project" value="HPA"/>
</dbReference>
<dbReference type="GO" id="GO:0005886">
    <property type="term" value="C:plasma membrane"/>
    <property type="evidence" value="ECO:0000314"/>
    <property type="project" value="HPA"/>
</dbReference>
<dbReference type="GO" id="GO:0042802">
    <property type="term" value="F:identical protein binding"/>
    <property type="evidence" value="ECO:0000353"/>
    <property type="project" value="IntAct"/>
</dbReference>
<dbReference type="GO" id="GO:0002250">
    <property type="term" value="P:adaptive immune response"/>
    <property type="evidence" value="ECO:0007669"/>
    <property type="project" value="UniProtKB-KW"/>
</dbReference>
<dbReference type="GO" id="GO:0006914">
    <property type="term" value="P:autophagy"/>
    <property type="evidence" value="ECO:0007669"/>
    <property type="project" value="UniProtKB-KW"/>
</dbReference>
<dbReference type="GO" id="GO:0006952">
    <property type="term" value="P:defense response"/>
    <property type="evidence" value="ECO:0000304"/>
    <property type="project" value="ProtInc"/>
</dbReference>
<dbReference type="GO" id="GO:0007156">
    <property type="term" value="P:homophilic cell adhesion via plasma membrane adhesion molecules"/>
    <property type="evidence" value="ECO:0000304"/>
    <property type="project" value="ProtInc"/>
</dbReference>
<dbReference type="GO" id="GO:0006955">
    <property type="term" value="P:immune response"/>
    <property type="evidence" value="ECO:0000318"/>
    <property type="project" value="GO_Central"/>
</dbReference>
<dbReference type="GO" id="GO:0045087">
    <property type="term" value="P:innate immune response"/>
    <property type="evidence" value="ECO:0007669"/>
    <property type="project" value="UniProtKB-KW"/>
</dbReference>
<dbReference type="GO" id="GO:0032685">
    <property type="term" value="P:negative regulation of granulocyte macrophage colony-stimulating factor production"/>
    <property type="evidence" value="ECO:0000314"/>
    <property type="project" value="UniProtKB"/>
</dbReference>
<dbReference type="GO" id="GO:0032701">
    <property type="term" value="P:negative regulation of interleukin-18 production"/>
    <property type="evidence" value="ECO:0000314"/>
    <property type="project" value="UniProtKB"/>
</dbReference>
<dbReference type="GO" id="GO:0033004">
    <property type="term" value="P:negative regulation of mast cell activation"/>
    <property type="evidence" value="ECO:0000314"/>
    <property type="project" value="UniProtKB"/>
</dbReference>
<dbReference type="GO" id="GO:0043305">
    <property type="term" value="P:negative regulation of mast cell degranulation"/>
    <property type="evidence" value="ECO:0000314"/>
    <property type="project" value="UniProtKB"/>
</dbReference>
<dbReference type="GO" id="GO:2001256">
    <property type="term" value="P:regulation of store-operated calcium entry"/>
    <property type="evidence" value="ECO:0000314"/>
    <property type="project" value="UniProtKB"/>
</dbReference>
<dbReference type="GO" id="GO:0042110">
    <property type="term" value="P:T cell activation"/>
    <property type="evidence" value="ECO:0000318"/>
    <property type="project" value="GO_Central"/>
</dbReference>
<dbReference type="CDD" id="cd16842">
    <property type="entry name" value="Ig_SLAM-like_N"/>
    <property type="match status" value="1"/>
</dbReference>
<dbReference type="FunFam" id="2.60.40.10:FF:000470">
    <property type="entry name" value="SLAM family member 7"/>
    <property type="match status" value="1"/>
</dbReference>
<dbReference type="FunFam" id="2.60.40.10:FF:000820">
    <property type="entry name" value="SLAM family member 7"/>
    <property type="match status" value="1"/>
</dbReference>
<dbReference type="Gene3D" id="2.60.40.10">
    <property type="entry name" value="Immunoglobulins"/>
    <property type="match status" value="2"/>
</dbReference>
<dbReference type="InterPro" id="IPR015631">
    <property type="entry name" value="CD2/SLAM_rcpt"/>
</dbReference>
<dbReference type="InterPro" id="IPR007110">
    <property type="entry name" value="Ig-like_dom"/>
</dbReference>
<dbReference type="InterPro" id="IPR036179">
    <property type="entry name" value="Ig-like_dom_sf"/>
</dbReference>
<dbReference type="InterPro" id="IPR013783">
    <property type="entry name" value="Ig-like_fold"/>
</dbReference>
<dbReference type="InterPro" id="IPR003599">
    <property type="entry name" value="Ig_sub"/>
</dbReference>
<dbReference type="PANTHER" id="PTHR12080">
    <property type="entry name" value="SIGNALING LYMPHOCYTIC ACTIVATION MOLECULE"/>
    <property type="match status" value="1"/>
</dbReference>
<dbReference type="PANTHER" id="PTHR12080:SF103">
    <property type="entry name" value="SLAM FAMILY MEMBER 5"/>
    <property type="match status" value="1"/>
</dbReference>
<dbReference type="Pfam" id="PF13927">
    <property type="entry name" value="Ig_3"/>
    <property type="match status" value="1"/>
</dbReference>
<dbReference type="SMART" id="SM00409">
    <property type="entry name" value="IG"/>
    <property type="match status" value="2"/>
</dbReference>
<dbReference type="SUPFAM" id="SSF48726">
    <property type="entry name" value="Immunoglobulin"/>
    <property type="match status" value="2"/>
</dbReference>
<dbReference type="PROSITE" id="PS50835">
    <property type="entry name" value="IG_LIKE"/>
    <property type="match status" value="1"/>
</dbReference>
<evidence type="ECO:0000250" key="1">
    <source>
        <dbReference type="UniProtKB" id="Q13291"/>
    </source>
</evidence>
<evidence type="ECO:0000250" key="2">
    <source>
        <dbReference type="UniProtKB" id="Q18PI6"/>
    </source>
</evidence>
<evidence type="ECO:0000255" key="3"/>
<evidence type="ECO:0000255" key="4">
    <source>
        <dbReference type="PROSITE-ProRule" id="PRU00114"/>
    </source>
</evidence>
<evidence type="ECO:0000256" key="5">
    <source>
        <dbReference type="SAM" id="MobiDB-lite"/>
    </source>
</evidence>
<evidence type="ECO:0000269" key="6">
    <source>
    </source>
</evidence>
<evidence type="ECO:0000269" key="7">
    <source>
    </source>
</evidence>
<evidence type="ECO:0000269" key="8">
    <source>
    </source>
</evidence>
<evidence type="ECO:0000269" key="9">
    <source>
    </source>
</evidence>
<evidence type="ECO:0000269" key="10">
    <source>
    </source>
</evidence>
<evidence type="ECO:0000269" key="11">
    <source>
    </source>
</evidence>
<evidence type="ECO:0000269" key="12">
    <source>
    </source>
</evidence>
<evidence type="ECO:0000269" key="13">
    <source>
    </source>
</evidence>
<evidence type="ECO:0000269" key="14">
    <source>
    </source>
</evidence>
<evidence type="ECO:0000269" key="15">
    <source>
    </source>
</evidence>
<evidence type="ECO:0000269" key="16">
    <source>
    </source>
</evidence>
<evidence type="ECO:0000269" key="17">
    <source>
    </source>
</evidence>
<evidence type="ECO:0000269" key="18">
    <source>
    </source>
</evidence>
<evidence type="ECO:0000269" key="19">
    <source>
    </source>
</evidence>
<evidence type="ECO:0000303" key="20">
    <source>
    </source>
</evidence>
<evidence type="ECO:0000303" key="21">
    <source>
    </source>
</evidence>
<evidence type="ECO:0000303" key="22">
    <source>
    </source>
</evidence>
<evidence type="ECO:0000303" key="23">
    <source>
    </source>
</evidence>
<evidence type="ECO:0000303" key="24">
    <source>
    </source>
</evidence>
<evidence type="ECO:0000303" key="25">
    <source>
    </source>
</evidence>
<evidence type="ECO:0000303" key="26">
    <source ref="4"/>
</evidence>
<evidence type="ECO:0000305" key="27"/>
<evidence type="ECO:0000305" key="28">
    <source>
    </source>
</evidence>
<evidence type="ECO:0000305" key="29">
    <source>
    </source>
</evidence>
<evidence type="ECO:0007829" key="30">
    <source>
        <dbReference type="PDB" id="2PKD"/>
    </source>
</evidence>
<feature type="signal peptide" evidence="6">
    <location>
        <begin position="1"/>
        <end position="21"/>
    </location>
</feature>
<feature type="chain" id="PRO_0000252029" description="SLAM family member 5">
    <location>
        <begin position="22"/>
        <end position="345"/>
    </location>
</feature>
<feature type="topological domain" description="Extracellular" evidence="3">
    <location>
        <begin position="22"/>
        <end position="225"/>
    </location>
</feature>
<feature type="transmembrane region" description="Helical" evidence="3">
    <location>
        <begin position="226"/>
        <end position="246"/>
    </location>
</feature>
<feature type="topological domain" description="Cytoplasmic" evidence="3">
    <location>
        <begin position="247"/>
        <end position="345"/>
    </location>
</feature>
<feature type="domain" description="Ig-like V-type">
    <location>
        <begin position="26"/>
        <end position="129"/>
    </location>
</feature>
<feature type="domain" description="Ig-like C2-type">
    <location>
        <begin position="135"/>
        <end position="207"/>
    </location>
</feature>
<feature type="region of interest" description="Disordered" evidence="5">
    <location>
        <begin position="326"/>
        <end position="345"/>
    </location>
</feature>
<feature type="short sequence motif" description="ITSM 1" evidence="1">
    <location>
        <begin position="277"/>
        <end position="282"/>
    </location>
</feature>
<feature type="short sequence motif" description="ITSM 2" evidence="1">
    <location>
        <begin position="314"/>
        <end position="319"/>
    </location>
</feature>
<feature type="compositionally biased region" description="Polar residues" evidence="5">
    <location>
        <begin position="328"/>
        <end position="345"/>
    </location>
</feature>
<feature type="modified residue" description="Phosphotyrosine" evidence="29">
    <location>
        <position position="279"/>
    </location>
</feature>
<feature type="modified residue" description="Phosphotyrosine; by LYN" evidence="15 17">
    <location>
        <position position="296"/>
    </location>
</feature>
<feature type="modified residue" description="Phosphotyrosine" evidence="15 29">
    <location>
        <position position="316"/>
    </location>
</feature>
<feature type="modified residue" description="Phosphotyrosine; by FES" evidence="17">
    <location>
        <position position="341"/>
    </location>
</feature>
<feature type="glycosylation site" description="N-linked (GlcNAc...) asparagine" evidence="3">
    <location>
        <position position="150"/>
    </location>
</feature>
<feature type="disulfide bond" evidence="4">
    <location>
        <begin position="155"/>
        <end position="193"/>
    </location>
</feature>
<feature type="splice variant" id="VSP_020848" description="In isoform 7." evidence="22 24">
    <original>WPEAAGKDSEIFTVNGILGESVTFPVNIQEPRQVKIIAWTSKTSVAYVTPGDSETAPVVTVTHRNYYERIHALGPNYNLVISDLRMEDAGDYKADINTQADPYTTTKRYNLQIYR</original>
    <variation>C</variation>
    <location>
        <begin position="16"/>
        <end position="130"/>
    </location>
</feature>
<feature type="splice variant" id="VSP_020849" description="In isoform 6." evidence="21">
    <original>DIAMGFRTHHTGLLSVLAMFFLLVLILS</original>
    <variation>GNQLCPSLLVSLRDHSEELQGLNVGHIL</variation>
    <location>
        <begin position="214"/>
        <end position="241"/>
    </location>
</feature>
<feature type="splice variant" id="VSP_020850" description="In isoform 6." evidence="21">
    <location>
        <begin position="242"/>
        <end position="345"/>
    </location>
</feature>
<feature type="splice variant" id="VSP_020851" description="In isoform 3 and isoform 7." evidence="20 21 22 23 24 25 26">
    <original>GRIFPEGSCLNTFTKNPY</original>
    <variation>D</variation>
    <location>
        <begin position="254"/>
        <end position="271"/>
    </location>
</feature>
<feature type="splice variant" id="VSP_020852" description="In isoform 2." evidence="21">
    <location>
        <begin position="254"/>
        <end position="259"/>
    </location>
</feature>
<feature type="splice variant" id="VSP_020853" description="In isoform 5." evidence="21">
    <original>RIFPEGSCLNTFTKNPYA</original>
    <variation>ASLQGRASEHSLFRSAVC</variation>
    <location>
        <begin position="255"/>
        <end position="272"/>
    </location>
</feature>
<feature type="splice variant" id="VSP_020854" description="In isoform 4." evidence="21">
    <original>SCLNTFTKNPYAASKKTIYT</original>
    <variation>KMWKLTFSPPGTEAIYPRFS</variation>
    <location>
        <begin position="261"/>
        <end position="280"/>
    </location>
</feature>
<feature type="splice variant" id="VSP_020855" description="In isoform 5." evidence="21">
    <location>
        <begin position="273"/>
        <end position="345"/>
    </location>
</feature>
<feature type="splice variant" id="VSP_020856" description="In isoform 4." evidence="21">
    <location>
        <begin position="281"/>
        <end position="345"/>
    </location>
</feature>
<feature type="mutagenesis site" description="Loss of dimerization." evidence="16">
    <original>T</original>
    <variation>A</variation>
    <location>
        <position position="55"/>
    </location>
</feature>
<feature type="mutagenesis site" description="No effect." evidence="16">
    <original>Y</original>
    <variation>A</variation>
    <location>
        <position position="62"/>
    </location>
</feature>
<feature type="mutagenesis site" description="Loss of dimerization." evidence="16">
    <original>Y</original>
    <variation>D</variation>
    <location>
        <position position="62"/>
    </location>
</feature>
<feature type="mutagenesis site" description="Loss of dimerization." evidence="16">
    <original>T</original>
    <variation>A</variation>
    <location>
        <position position="77"/>
    </location>
</feature>
<feature type="mutagenesis site" description="Loss of dimerization." evidence="16">
    <original>H</original>
    <variation>A</variation>
    <location>
        <position position="78"/>
    </location>
</feature>
<feature type="mutagenesis site" description="Loss of dimerization." evidence="16">
    <original>D</original>
    <variation>A</variation>
    <location>
        <position position="110"/>
    </location>
</feature>
<feature type="mutagenesis site" description="Loss of dimerization." evidence="16">
    <original>N</original>
    <variation>A</variation>
    <location>
        <position position="112"/>
    </location>
</feature>
<feature type="mutagenesis site" description="Loss of dimerization." evidence="16">
    <original>T</original>
    <variation>A</variation>
    <location>
        <position position="119"/>
    </location>
</feature>
<feature type="mutagenesis site" description="Reduced tyrosine phosphorylation, reduced binding of SH2D1B and loss of binding of SH2D1A." evidence="12">
    <original>Y</original>
    <variation>F</variation>
    <location>
        <position position="279"/>
    </location>
</feature>
<feature type="mutagenesis site" description="Reduced tyrosine phosphorylation and reduced binding of SH2D1B. Loss of phosphorylation and loss of binding of SH2D1A and SH2D1B; when associated with F-279." evidence="12">
    <original>Y</original>
    <variation>F</variation>
    <location>
        <position position="316"/>
    </location>
</feature>
<feature type="sequence conflict" description="In Ref. 4; CAG46645." evidence="27" ref="4">
    <original>P</original>
    <variation>S</variation>
    <location>
        <position position="311"/>
    </location>
</feature>
<feature type="strand" evidence="30">
    <location>
        <begin position="27"/>
        <end position="32"/>
    </location>
</feature>
<feature type="strand" evidence="30">
    <location>
        <begin position="37"/>
        <end position="39"/>
    </location>
</feature>
<feature type="strand" evidence="30">
    <location>
        <begin position="49"/>
        <end position="64"/>
    </location>
</feature>
<feature type="strand" evidence="30">
    <location>
        <begin position="68"/>
        <end position="70"/>
    </location>
</feature>
<feature type="strand" evidence="30">
    <location>
        <begin position="73"/>
        <end position="76"/>
    </location>
</feature>
<feature type="helix" evidence="30">
    <location>
        <begin position="79"/>
        <end position="81"/>
    </location>
</feature>
<feature type="strand" evidence="30">
    <location>
        <begin position="85"/>
        <end position="87"/>
    </location>
</feature>
<feature type="turn" evidence="30">
    <location>
        <begin position="89"/>
        <end position="91"/>
    </location>
</feature>
<feature type="strand" evidence="30">
    <location>
        <begin position="94"/>
        <end position="96"/>
    </location>
</feature>
<feature type="helix" evidence="30">
    <location>
        <begin position="101"/>
        <end position="103"/>
    </location>
</feature>
<feature type="strand" evidence="30">
    <location>
        <begin position="105"/>
        <end position="115"/>
    </location>
</feature>
<feature type="strand" evidence="30">
    <location>
        <begin position="118"/>
        <end position="129"/>
    </location>
</feature>
<organism>
    <name type="scientific">Homo sapiens</name>
    <name type="common">Human</name>
    <dbReference type="NCBI Taxonomy" id="9606"/>
    <lineage>
        <taxon>Eukaryota</taxon>
        <taxon>Metazoa</taxon>
        <taxon>Chordata</taxon>
        <taxon>Craniata</taxon>
        <taxon>Vertebrata</taxon>
        <taxon>Euteleostomi</taxon>
        <taxon>Mammalia</taxon>
        <taxon>Eutheria</taxon>
        <taxon>Euarchontoglires</taxon>
        <taxon>Primates</taxon>
        <taxon>Haplorrhini</taxon>
        <taxon>Catarrhini</taxon>
        <taxon>Hominidae</taxon>
        <taxon>Homo</taxon>
    </lineage>
</organism>
<sequence length="345" mass="38782">MAQHHLWILLLCLQTWPEAAGKDSEIFTVNGILGESVTFPVNIQEPRQVKIIAWTSKTSVAYVTPGDSETAPVVTVTHRNYYERIHALGPNYNLVISDLRMEDAGDYKADINTQADPYTTTKRYNLQIYRRLGKPKITQSLMASVNSTCNVTLTCSVEKEEKNVTYNWSPLGEEGNVLQIFQTPEDQELTYTCTAQNPVSNNSDSISARQLCADIAMGFRTHHTGLLSVLAMFFLLVLILSSVFLFRLFKRRQGRIFPEGSCLNTFTKNPYAASKKTIYTYIMASRNTQPAESRIYDEILQSKVLPSKEEPVNTVYSEVQFADKMGKASTQDSKPPGTSSYEIVI</sequence>
<proteinExistence type="evidence at protein level"/>
<name>SLAF5_HUMAN</name>
<reference key="1">
    <citation type="journal article" date="1997" name="Blood">
        <title>CD84 leukocyte antigen is a new member of the Ig superfamily.</title>
        <authorList>
            <person name="de la Fuente M.A."/>
            <person name="Pizcueta P."/>
            <person name="Nadal M."/>
            <person name="Bosch J."/>
            <person name="Engel P."/>
        </authorList>
    </citation>
    <scope>NUCLEOTIDE SEQUENCE [MRNA] (ISOFORM 3)</scope>
    <scope>GLYCOSYLATION</scope>
    <scope>TISSUE SPECIFICITY</scope>
</reference>
<reference key="2">
    <citation type="journal article" date="2000" name="Biochem. J.">
        <title>Characterization of MAX.3 antigen, a glycoprotein expressed on mature macrophages, dendritic cells and blood platelets: identity with CD84.</title>
        <authorList>
            <person name="Krause S.W."/>
            <person name="Rehli M."/>
            <person name="Heinz S."/>
            <person name="Ebner R."/>
            <person name="Andreesen R."/>
        </authorList>
    </citation>
    <scope>NUCLEOTIDE SEQUENCE [MRNA] (ISOFORM 3)</scope>
    <scope>PROTEIN SEQUENCE OF 22-35</scope>
    <scope>GLYCOSYLATION</scope>
    <scope>TISSUE SPECIFICITY</scope>
</reference>
<reference key="3">
    <citation type="journal article" date="2000" name="Tissue Antigens">
        <title>Genomic characterization of CD84 reveals the existence of five isoforms differing in their cytoplasmic domains.</title>
        <authorList>
            <person name="Palou E."/>
            <person name="Pirotto F."/>
            <person name="Sole J."/>
            <person name="Freed J.H."/>
            <person name="Peral B."/>
            <person name="Vilardell C."/>
            <person name="Vilella R."/>
            <person name="Vives J."/>
            <person name="Gaya A."/>
        </authorList>
    </citation>
    <scope>NUCLEOTIDE SEQUENCE [GENOMIC DNA / MRNA] (ISOFORMS 1; 2; 3; 4; 5 AND 6)</scope>
</reference>
<reference key="4">
    <citation type="submission" date="2004-06" db="EMBL/GenBank/DDBJ databases">
        <title>Cloning of human full open reading frames in Gateway(TM) system entry vector (pDONR201).</title>
        <authorList>
            <person name="Halleck A."/>
            <person name="Ebert L."/>
            <person name="Mkoundinya M."/>
            <person name="Schick M."/>
            <person name="Eisenstein S."/>
            <person name="Neubert P."/>
            <person name="Kstrang K."/>
            <person name="Schatten R."/>
            <person name="Shen B."/>
            <person name="Henze S."/>
            <person name="Mar W."/>
            <person name="Korn B."/>
            <person name="Zuo D."/>
            <person name="Hu Y."/>
            <person name="LaBaer J."/>
        </authorList>
    </citation>
    <scope>NUCLEOTIDE SEQUENCE [LARGE SCALE MRNA] (ISOFORM 3)</scope>
</reference>
<reference key="5">
    <citation type="journal article" date="2004" name="Nat. Genet.">
        <title>Complete sequencing and characterization of 21,243 full-length human cDNAs.</title>
        <authorList>
            <person name="Ota T."/>
            <person name="Suzuki Y."/>
            <person name="Nishikawa T."/>
            <person name="Otsuki T."/>
            <person name="Sugiyama T."/>
            <person name="Irie R."/>
            <person name="Wakamatsu A."/>
            <person name="Hayashi K."/>
            <person name="Sato H."/>
            <person name="Nagai K."/>
            <person name="Kimura K."/>
            <person name="Makita H."/>
            <person name="Sekine M."/>
            <person name="Obayashi M."/>
            <person name="Nishi T."/>
            <person name="Shibahara T."/>
            <person name="Tanaka T."/>
            <person name="Ishii S."/>
            <person name="Yamamoto J."/>
            <person name="Saito K."/>
            <person name="Kawai Y."/>
            <person name="Isono Y."/>
            <person name="Nakamura Y."/>
            <person name="Nagahari K."/>
            <person name="Murakami K."/>
            <person name="Yasuda T."/>
            <person name="Iwayanagi T."/>
            <person name="Wagatsuma M."/>
            <person name="Shiratori A."/>
            <person name="Sudo H."/>
            <person name="Hosoiri T."/>
            <person name="Kaku Y."/>
            <person name="Kodaira H."/>
            <person name="Kondo H."/>
            <person name="Sugawara M."/>
            <person name="Takahashi M."/>
            <person name="Kanda K."/>
            <person name="Yokoi T."/>
            <person name="Furuya T."/>
            <person name="Kikkawa E."/>
            <person name="Omura Y."/>
            <person name="Abe K."/>
            <person name="Kamihara K."/>
            <person name="Katsuta N."/>
            <person name="Sato K."/>
            <person name="Tanikawa M."/>
            <person name="Yamazaki M."/>
            <person name="Ninomiya K."/>
            <person name="Ishibashi T."/>
            <person name="Yamashita H."/>
            <person name="Murakawa K."/>
            <person name="Fujimori K."/>
            <person name="Tanai H."/>
            <person name="Kimata M."/>
            <person name="Watanabe M."/>
            <person name="Hiraoka S."/>
            <person name="Chiba Y."/>
            <person name="Ishida S."/>
            <person name="Ono Y."/>
            <person name="Takiguchi S."/>
            <person name="Watanabe S."/>
            <person name="Yosida M."/>
            <person name="Hotuta T."/>
            <person name="Kusano J."/>
            <person name="Kanehori K."/>
            <person name="Takahashi-Fujii A."/>
            <person name="Hara H."/>
            <person name="Tanase T.-O."/>
            <person name="Nomura Y."/>
            <person name="Togiya S."/>
            <person name="Komai F."/>
            <person name="Hara R."/>
            <person name="Takeuchi K."/>
            <person name="Arita M."/>
            <person name="Imose N."/>
            <person name="Musashino K."/>
            <person name="Yuuki H."/>
            <person name="Oshima A."/>
            <person name="Sasaki N."/>
            <person name="Aotsuka S."/>
            <person name="Yoshikawa Y."/>
            <person name="Matsunawa H."/>
            <person name="Ichihara T."/>
            <person name="Shiohata N."/>
            <person name="Sano S."/>
            <person name="Moriya S."/>
            <person name="Momiyama H."/>
            <person name="Satoh N."/>
            <person name="Takami S."/>
            <person name="Terashima Y."/>
            <person name="Suzuki O."/>
            <person name="Nakagawa S."/>
            <person name="Senoh A."/>
            <person name="Mizoguchi H."/>
            <person name="Goto Y."/>
            <person name="Shimizu F."/>
            <person name="Wakebe H."/>
            <person name="Hishigaki H."/>
            <person name="Watanabe T."/>
            <person name="Sugiyama A."/>
            <person name="Takemoto M."/>
            <person name="Kawakami B."/>
            <person name="Yamazaki M."/>
            <person name="Watanabe K."/>
            <person name="Kumagai A."/>
            <person name="Itakura S."/>
            <person name="Fukuzumi Y."/>
            <person name="Fujimori Y."/>
            <person name="Komiyama M."/>
            <person name="Tashiro H."/>
            <person name="Tanigami A."/>
            <person name="Fujiwara T."/>
            <person name="Ono T."/>
            <person name="Yamada K."/>
            <person name="Fujii Y."/>
            <person name="Ozaki K."/>
            <person name="Hirao M."/>
            <person name="Ohmori Y."/>
            <person name="Kawabata A."/>
            <person name="Hikiji T."/>
            <person name="Kobatake N."/>
            <person name="Inagaki H."/>
            <person name="Ikema Y."/>
            <person name="Okamoto S."/>
            <person name="Okitani R."/>
            <person name="Kawakami T."/>
            <person name="Noguchi S."/>
            <person name="Itoh T."/>
            <person name="Shigeta K."/>
            <person name="Senba T."/>
            <person name="Matsumura K."/>
            <person name="Nakajima Y."/>
            <person name="Mizuno T."/>
            <person name="Morinaga M."/>
            <person name="Sasaki M."/>
            <person name="Togashi T."/>
            <person name="Oyama M."/>
            <person name="Hata H."/>
            <person name="Watanabe M."/>
            <person name="Komatsu T."/>
            <person name="Mizushima-Sugano J."/>
            <person name="Satoh T."/>
            <person name="Shirai Y."/>
            <person name="Takahashi Y."/>
            <person name="Nakagawa K."/>
            <person name="Okumura K."/>
            <person name="Nagase T."/>
            <person name="Nomura N."/>
            <person name="Kikuchi H."/>
            <person name="Masuho Y."/>
            <person name="Yamashita R."/>
            <person name="Nakai K."/>
            <person name="Yada T."/>
            <person name="Nakamura Y."/>
            <person name="Ohara O."/>
            <person name="Isogai T."/>
            <person name="Sugano S."/>
        </authorList>
    </citation>
    <scope>NUCLEOTIDE SEQUENCE [LARGE SCALE MRNA] (ISOFORMS 3 AND 7)</scope>
    <source>
        <tissue>Thalamus</tissue>
        <tissue>Umbilical cord blood</tissue>
    </source>
</reference>
<reference key="6">
    <citation type="submission" date="2005-09" db="EMBL/GenBank/DDBJ databases">
        <authorList>
            <person name="Mural R.J."/>
            <person name="Istrail S."/>
            <person name="Sutton G.G."/>
            <person name="Florea L."/>
            <person name="Halpern A.L."/>
            <person name="Mobarry C.M."/>
            <person name="Lippert R."/>
            <person name="Walenz B."/>
            <person name="Shatkay H."/>
            <person name="Dew I."/>
            <person name="Miller J.R."/>
            <person name="Flanigan M.J."/>
            <person name="Edwards N.J."/>
            <person name="Bolanos R."/>
            <person name="Fasulo D."/>
            <person name="Halldorsson B.V."/>
            <person name="Hannenhalli S."/>
            <person name="Turner R."/>
            <person name="Yooseph S."/>
            <person name="Lu F."/>
            <person name="Nusskern D.R."/>
            <person name="Shue B.C."/>
            <person name="Zheng X.H."/>
            <person name="Zhong F."/>
            <person name="Delcher A.L."/>
            <person name="Huson D.H."/>
            <person name="Kravitz S.A."/>
            <person name="Mouchard L."/>
            <person name="Reinert K."/>
            <person name="Remington K.A."/>
            <person name="Clark A.G."/>
            <person name="Waterman M.S."/>
            <person name="Eichler E.E."/>
            <person name="Adams M.D."/>
            <person name="Hunkapiller M.W."/>
            <person name="Myers E.W."/>
            <person name="Venter J.C."/>
        </authorList>
    </citation>
    <scope>NUCLEOTIDE SEQUENCE [LARGE SCALE GENOMIC DNA]</scope>
</reference>
<reference key="7">
    <citation type="journal article" date="2007" name="BMC Genomics">
        <title>The full-ORF clone resource of the German cDNA consortium.</title>
        <authorList>
            <person name="Bechtel S."/>
            <person name="Rosenfelder H."/>
            <person name="Duda A."/>
            <person name="Schmidt C.P."/>
            <person name="Ernst U."/>
            <person name="Wellenreuther R."/>
            <person name="Mehrle A."/>
            <person name="Schuster C."/>
            <person name="Bahr A."/>
            <person name="Bloecker H."/>
            <person name="Heubner D."/>
            <person name="Hoerlein A."/>
            <person name="Michel G."/>
            <person name="Wedler H."/>
            <person name="Koehrer K."/>
            <person name="Ottenwaelder B."/>
            <person name="Poustka A."/>
            <person name="Wiemann S."/>
            <person name="Schupp I."/>
        </authorList>
    </citation>
    <scope>NUCLEOTIDE SEQUENCE [LARGE SCALE MRNA] (ISOFORM 7)</scope>
    <source>
        <tissue>Semen</tissue>
    </source>
</reference>
<reference key="8">
    <citation type="journal article" date="2006" name="Nature">
        <title>The DNA sequence and biological annotation of human chromosome 1.</title>
        <authorList>
            <person name="Gregory S.G."/>
            <person name="Barlow K.F."/>
            <person name="McLay K.E."/>
            <person name="Kaul R."/>
            <person name="Swarbreck D."/>
            <person name="Dunham A."/>
            <person name="Scott C.E."/>
            <person name="Howe K.L."/>
            <person name="Woodfine K."/>
            <person name="Spencer C.C.A."/>
            <person name="Jones M.C."/>
            <person name="Gillson C."/>
            <person name="Searle S."/>
            <person name="Zhou Y."/>
            <person name="Kokocinski F."/>
            <person name="McDonald L."/>
            <person name="Evans R."/>
            <person name="Phillips K."/>
            <person name="Atkinson A."/>
            <person name="Cooper R."/>
            <person name="Jones C."/>
            <person name="Hall R.E."/>
            <person name="Andrews T.D."/>
            <person name="Lloyd C."/>
            <person name="Ainscough R."/>
            <person name="Almeida J.P."/>
            <person name="Ambrose K.D."/>
            <person name="Anderson F."/>
            <person name="Andrew R.W."/>
            <person name="Ashwell R.I.S."/>
            <person name="Aubin K."/>
            <person name="Babbage A.K."/>
            <person name="Bagguley C.L."/>
            <person name="Bailey J."/>
            <person name="Beasley H."/>
            <person name="Bethel G."/>
            <person name="Bird C.P."/>
            <person name="Bray-Allen S."/>
            <person name="Brown J.Y."/>
            <person name="Brown A.J."/>
            <person name="Buckley D."/>
            <person name="Burton J."/>
            <person name="Bye J."/>
            <person name="Carder C."/>
            <person name="Chapman J.C."/>
            <person name="Clark S.Y."/>
            <person name="Clarke G."/>
            <person name="Clee C."/>
            <person name="Cobley V."/>
            <person name="Collier R.E."/>
            <person name="Corby N."/>
            <person name="Coville G.J."/>
            <person name="Davies J."/>
            <person name="Deadman R."/>
            <person name="Dunn M."/>
            <person name="Earthrowl M."/>
            <person name="Ellington A.G."/>
            <person name="Errington H."/>
            <person name="Frankish A."/>
            <person name="Frankland J."/>
            <person name="French L."/>
            <person name="Garner P."/>
            <person name="Garnett J."/>
            <person name="Gay L."/>
            <person name="Ghori M.R.J."/>
            <person name="Gibson R."/>
            <person name="Gilby L.M."/>
            <person name="Gillett W."/>
            <person name="Glithero R.J."/>
            <person name="Grafham D.V."/>
            <person name="Griffiths C."/>
            <person name="Griffiths-Jones S."/>
            <person name="Grocock R."/>
            <person name="Hammond S."/>
            <person name="Harrison E.S.I."/>
            <person name="Hart E."/>
            <person name="Haugen E."/>
            <person name="Heath P.D."/>
            <person name="Holmes S."/>
            <person name="Holt K."/>
            <person name="Howden P.J."/>
            <person name="Hunt A.R."/>
            <person name="Hunt S.E."/>
            <person name="Hunter G."/>
            <person name="Isherwood J."/>
            <person name="James R."/>
            <person name="Johnson C."/>
            <person name="Johnson D."/>
            <person name="Joy A."/>
            <person name="Kay M."/>
            <person name="Kershaw J.K."/>
            <person name="Kibukawa M."/>
            <person name="Kimberley A.M."/>
            <person name="King A."/>
            <person name="Knights A.J."/>
            <person name="Lad H."/>
            <person name="Laird G."/>
            <person name="Lawlor S."/>
            <person name="Leongamornlert D.A."/>
            <person name="Lloyd D.M."/>
            <person name="Loveland J."/>
            <person name="Lovell J."/>
            <person name="Lush M.J."/>
            <person name="Lyne R."/>
            <person name="Martin S."/>
            <person name="Mashreghi-Mohammadi M."/>
            <person name="Matthews L."/>
            <person name="Matthews N.S.W."/>
            <person name="McLaren S."/>
            <person name="Milne S."/>
            <person name="Mistry S."/>
            <person name="Moore M.J.F."/>
            <person name="Nickerson T."/>
            <person name="O'Dell C.N."/>
            <person name="Oliver K."/>
            <person name="Palmeiri A."/>
            <person name="Palmer S.A."/>
            <person name="Parker A."/>
            <person name="Patel D."/>
            <person name="Pearce A.V."/>
            <person name="Peck A.I."/>
            <person name="Pelan S."/>
            <person name="Phelps K."/>
            <person name="Phillimore B.J."/>
            <person name="Plumb R."/>
            <person name="Rajan J."/>
            <person name="Raymond C."/>
            <person name="Rouse G."/>
            <person name="Saenphimmachak C."/>
            <person name="Sehra H.K."/>
            <person name="Sheridan E."/>
            <person name="Shownkeen R."/>
            <person name="Sims S."/>
            <person name="Skuce C.D."/>
            <person name="Smith M."/>
            <person name="Steward C."/>
            <person name="Subramanian S."/>
            <person name="Sycamore N."/>
            <person name="Tracey A."/>
            <person name="Tromans A."/>
            <person name="Van Helmond Z."/>
            <person name="Wall M."/>
            <person name="Wallis J.M."/>
            <person name="White S."/>
            <person name="Whitehead S.L."/>
            <person name="Wilkinson J.E."/>
            <person name="Willey D.L."/>
            <person name="Williams H."/>
            <person name="Wilming L."/>
            <person name="Wray P.W."/>
            <person name="Wu Z."/>
            <person name="Coulson A."/>
            <person name="Vaudin M."/>
            <person name="Sulston J.E."/>
            <person name="Durbin R.M."/>
            <person name="Hubbard T."/>
            <person name="Wooster R."/>
            <person name="Dunham I."/>
            <person name="Carter N.P."/>
            <person name="McVean G."/>
            <person name="Ross M.T."/>
            <person name="Harrow J."/>
            <person name="Olson M.V."/>
            <person name="Beck S."/>
            <person name="Rogers J."/>
            <person name="Bentley D.R."/>
        </authorList>
    </citation>
    <scope>NUCLEOTIDE SEQUENCE [LARGE SCALE GENOMIC DNA]</scope>
</reference>
<reference key="9">
    <citation type="journal article" date="2004" name="Genome Res.">
        <title>The status, quality, and expansion of the NIH full-length cDNA project: the Mammalian Gene Collection (MGC).</title>
        <authorList>
            <consortium name="The MGC Project Team"/>
        </authorList>
    </citation>
    <scope>NUCLEOTIDE SEQUENCE [LARGE SCALE MRNA] (ISOFORM 3)</scope>
    <source>
        <tissue>Lymph</tissue>
    </source>
</reference>
<reference key="10">
    <citation type="journal article" date="2001" name="Blood">
        <title>Cell surface receptors Ly-9 and CD84 recruit the X-linked lymphoproliferative disease gene product SAP.</title>
        <authorList>
            <person name="Sayos J."/>
            <person name="Martin M."/>
            <person name="Chen A."/>
            <person name="Simarro M."/>
            <person name="Howie D."/>
            <person name="Morra M."/>
            <person name="Engel P."/>
            <person name="Terhorst C."/>
        </authorList>
    </citation>
    <scope>PHOSPHORYLATION</scope>
    <scope>SUBCELLULAR LOCATION</scope>
    <scope>INTERACTION WITH SH2D1A AND PTPN11</scope>
</reference>
<reference key="11">
    <citation type="journal article" date="2001" name="Clin. Immunol.">
        <title>Distinct interactions of the X-linked lymphoproliferative syndrome gene product SAP with cytoplasmic domains of members of the CD2 receptor family.</title>
        <authorList>
            <person name="Lewis J."/>
            <person name="Eiben L.J."/>
            <person name="Nelson D.L."/>
            <person name="Cohen J.I."/>
            <person name="Nichols K.E."/>
            <person name="Ochs H.D."/>
            <person name="Notarangelo L.D."/>
            <person name="Duckett C.S."/>
        </authorList>
    </citation>
    <scope>INTERACTION WITH PTPN6 AND PTPN11</scope>
</reference>
<reference key="12">
    <citation type="journal article" date="2001" name="J. Immunol.">
        <title>CD150 association with either the SH2-containing inositol phosphatase or the SH2-containing protein tyrosine phosphatase is regulated by the adaptor protein SH2D1A.</title>
        <authorList>
            <person name="Shlapatska L.M."/>
            <person name="Mikhalap S.V."/>
            <person name="Berdova A.G."/>
            <person name="Zelensky O.M."/>
            <person name="Yun T.J."/>
            <person name="Nichols K.E."/>
            <person name="Clark E.A."/>
            <person name="Sidorenko S.P."/>
        </authorList>
    </citation>
    <scope>DOMAIN ITSM MOTIF</scope>
</reference>
<reference key="13">
    <citation type="journal article" date="2001" name="J. Immunol.">
        <title>CD84 functions as a homophilic adhesion molecule and enhances IFN-gamma secretion: adhesion is mediated by Ig-like domain 1.</title>
        <authorList>
            <person name="Martin M."/>
            <person name="Romero X."/>
            <person name="de la Fuente M.A."/>
            <person name="Tovar V."/>
            <person name="Zapater N."/>
            <person name="Esplugues E."/>
            <person name="Pizcueta P."/>
            <person name="Bosch J."/>
            <person name="Engel P."/>
        </authorList>
    </citation>
    <scope>TISSUE SPECIFICITY</scope>
    <scope>HOMODIMERIZATION</scope>
    <scope>FUNCTION</scope>
</reference>
<reference key="14">
    <citation type="journal article" date="2002" name="Eur. J. Immunol.">
        <title>CD84 is up-regulated on a major population of human memory B cells and recruits the SH2 domain containing proteins SAP and EAT-2.</title>
        <authorList>
            <person name="Tangye S.G."/>
            <person name="van de Weerdt B.C.M."/>
            <person name="Avery D.T."/>
            <person name="Hodgkin P.D."/>
        </authorList>
    </citation>
    <scope>FUNCTION</scope>
    <scope>TISSUE SPECIFICITY</scope>
    <scope>PHOSPHORYLATION</scope>
    <scope>DEVELOPMENTAL STAGE</scope>
    <scope>INTERACTION WITH SH2D1A AND SH2D1B</scope>
</reference>
<reference key="15">
    <citation type="journal article" date="2003" name="J. Biol. Chem.">
        <title>Dual functional roles for the X-linked lymphoproliferative syndrome gene product SAP/SH2D1A in signaling through the signaling lymphocyte activation molecule (SLAM) family of immune receptors.</title>
        <authorList>
            <person name="Li C."/>
            <person name="Iosef C."/>
            <person name="Jia C.Y."/>
            <person name="Han V.K."/>
            <person name="Li S.S."/>
        </authorList>
    </citation>
    <scope>INTERACTION WITH SH2D1A; SH2D1B; INPP5D AND PTPN11</scope>
    <scope>PHOSPHORYLATION AT TYR-279 AND TYR-316</scope>
</reference>
<reference key="16">
    <citation type="journal article" date="2003" name="J. Immunol.">
        <title>Functional requirements for interactions between CD84 and Src homology 2 domain-containing proteins and their contribution to human T cell activation.</title>
        <authorList>
            <person name="Tangye S.G."/>
            <person name="Nichols K.E."/>
            <person name="Hare N.J."/>
            <person name="van de Weerdt B.C.M."/>
        </authorList>
    </citation>
    <scope>FUNCTION</scope>
    <scope>PHOSPHORYLATION</scope>
    <scope>MUTAGENESIS OF TYR-279 AND TYR-316</scope>
</reference>
<reference key="17">
    <citation type="journal article" date="2003" name="Exp. Hematol.">
        <title>CD84 expression on human hematopoietic progenitor cells.</title>
        <authorList>
            <person name="Zaiss M."/>
            <person name="Hirtreiter C."/>
            <person name="Rehli M."/>
            <person name="Rehm A."/>
            <person name="Kunz-Schughart L.A."/>
            <person name="Andreesen R."/>
            <person name="Hennemann B."/>
        </authorList>
    </citation>
    <scope>FUNCTION</scope>
    <scope>SUBCELLULAR LOCATION</scope>
    <scope>TISSUE SPECIFICITY</scope>
</reference>
<reference key="18">
    <citation type="journal article" date="2004" name="Tissue Antigens">
        <title>Differential expression of SAP and EAT-2-binding leukocyte cell-surface molecules CD84, CD150 (SLAM), CD229 (Ly9) and CD244 (2B4).</title>
        <authorList>
            <person name="Romero X."/>
            <person name="Benitez D."/>
            <person name="March S."/>
            <person name="Vilella R."/>
            <person name="Miralpeix M."/>
            <person name="Engel P."/>
        </authorList>
    </citation>
    <scope>TISSUE SPECIFICITY</scope>
</reference>
<reference key="19">
    <citation type="journal article" date="2005" name="Blood">
        <title>Platelet aggregation induces platelet aggregate stability via SLAM family receptor signaling.</title>
        <authorList>
            <person name="Nanda N."/>
            <person name="Andre P."/>
            <person name="Bao M."/>
            <person name="Clauser K."/>
            <person name="Deguzman F."/>
            <person name="Howie D."/>
            <person name="Conley P.B."/>
            <person name="Terhorst C."/>
            <person name="Phillips D.R."/>
        </authorList>
    </citation>
    <scope>FUNCTION</scope>
    <scope>PHOSPHORYLATION AT TYR-296 AND TYR-316</scope>
    <scope>IDENTIFICATION BY MASS SPECTROMETRY</scope>
</reference>
<reference key="20">
    <citation type="journal article" date="2011" name="J. Immunol.">
        <title>CD84 negatively regulates IgE high-affinity receptor signaling in human mast cells.</title>
        <authorList>
            <person name="Alvarez-Errico D."/>
            <person name="Oliver-Vila I."/>
            <person name="Ainsua-Enrich E."/>
            <person name="Gilfillan A.M."/>
            <person name="Picado C."/>
            <person name="Sayos J."/>
            <person name="Martin M."/>
        </authorList>
    </citation>
    <scope>FUNCTION</scope>
    <scope>PHOSPHORYLATION AT TYR-296 AND TYR-341</scope>
    <scope>TISSUE SPECIFICITY</scope>
</reference>
<reference key="21">
    <citation type="journal article" date="2018" name="Front. Immunol.">
        <title>Signaling lymphocyte activation molecule family 5 enhances autophagy and fine-tunes cytokine response in monocyte-derived dendritic cells via stabilization of interferon regulatory factor 8.</title>
        <authorList>
            <person name="Agod Z."/>
            <person name="Pazmandi K."/>
            <person name="Bencze D."/>
            <person name="Vereb G."/>
            <person name="Biro T."/>
            <person name="Szabo A."/>
            <person name="Rajnavolgyi E."/>
            <person name="Bacsi A."/>
            <person name="Engel P."/>
            <person name="Lanyi A."/>
        </authorList>
    </citation>
    <scope>FUNCTION</scope>
</reference>
<reference key="22">
    <citation type="journal article" date="2007" name="Proc. Natl. Acad. Sci. U.S.A.">
        <title>Structure of CD84 provides insight into SLAM family function.</title>
        <authorList>
            <person name="Yan Q."/>
            <person name="Malashkevich V.N."/>
            <person name="Fedorov A."/>
            <person name="Fedorov E."/>
            <person name="Cao E."/>
            <person name="Lary J.W."/>
            <person name="Cole J.L."/>
            <person name="Nathenson S.G."/>
            <person name="Almo S.C."/>
        </authorList>
    </citation>
    <scope>X-RAY CRYSTALLOGRAPHY (2.04 ANGSTROMS) OF 22-131</scope>
    <scope>SUBUNIT</scope>
    <scope>MUTAGENESIS OF THR-55; TYR-62; THR-77; HIS-78; ASP-110; ASN-112 AND THR-119</scope>
</reference>
<accession>Q9UIB8</accession>
<accession>B2R8T1</accession>
<accession>B7Z3R8</accession>
<accession>O15430</accession>
<accession>O95266</accession>
<accession>O95660</accession>
<accession>Q5H9R1</accession>
<accession>Q6FHA8</accession>
<accession>Q8WLP1</accession>
<accession>Q8WWI8</accession>
<accession>Q9UF04</accession>
<accession>Q9UIB6</accession>
<accession>Q9UIB7</accession>
<accession>Q9UIT7</accession>
<gene>
    <name type="primary">CD84</name>
    <name type="synonym">SLAMF5</name>
</gene>
<keyword id="KW-0002">3D-structure</keyword>
<keyword id="KW-1064">Adaptive immunity</keyword>
<keyword id="KW-0025">Alternative splicing</keyword>
<keyword id="KW-0072">Autophagy</keyword>
<keyword id="KW-0130">Cell adhesion</keyword>
<keyword id="KW-1003">Cell membrane</keyword>
<keyword id="KW-0903">Direct protein sequencing</keyword>
<keyword id="KW-1015">Disulfide bond</keyword>
<keyword id="KW-0325">Glycoprotein</keyword>
<keyword id="KW-0391">Immunity</keyword>
<keyword id="KW-0393">Immunoglobulin domain</keyword>
<keyword id="KW-0399">Innate immunity</keyword>
<keyword id="KW-0472">Membrane</keyword>
<keyword id="KW-0597">Phosphoprotein</keyword>
<keyword id="KW-1267">Proteomics identification</keyword>
<keyword id="KW-0675">Receptor</keyword>
<keyword id="KW-1185">Reference proteome</keyword>
<keyword id="KW-0677">Repeat</keyword>
<keyword id="KW-0732">Signal</keyword>
<keyword id="KW-0812">Transmembrane</keyword>
<keyword id="KW-1133">Transmembrane helix</keyword>